<feature type="chain" id="PRO_0000282486" description="ATP-dependent RNA helicase mak5">
    <location>
        <begin position="1"/>
        <end position="774"/>
    </location>
</feature>
<feature type="domain" description="Helicase ATP-binding" evidence="2">
    <location>
        <begin position="233"/>
        <end position="441"/>
    </location>
</feature>
<feature type="domain" description="Helicase C-terminal" evidence="3">
    <location>
        <begin position="493"/>
        <end position="643"/>
    </location>
</feature>
<feature type="region of interest" description="Disordered" evidence="4">
    <location>
        <begin position="1"/>
        <end position="37"/>
    </location>
</feature>
<feature type="region of interest" description="Disordered" evidence="4">
    <location>
        <begin position="87"/>
        <end position="183"/>
    </location>
</feature>
<feature type="region of interest" description="Disordered" evidence="4">
    <location>
        <begin position="689"/>
        <end position="718"/>
    </location>
</feature>
<feature type="short sequence motif" description="Q motif">
    <location>
        <begin position="202"/>
        <end position="230"/>
    </location>
</feature>
<feature type="short sequence motif" description="DEAD box">
    <location>
        <begin position="368"/>
        <end position="371"/>
    </location>
</feature>
<feature type="compositionally biased region" description="Basic and acidic residues" evidence="4">
    <location>
        <begin position="1"/>
        <end position="10"/>
    </location>
</feature>
<feature type="compositionally biased region" description="Acidic residues" evidence="4">
    <location>
        <begin position="106"/>
        <end position="115"/>
    </location>
</feature>
<feature type="compositionally biased region" description="Low complexity" evidence="4">
    <location>
        <begin position="118"/>
        <end position="137"/>
    </location>
</feature>
<feature type="compositionally biased region" description="Basic and acidic residues" evidence="4">
    <location>
        <begin position="140"/>
        <end position="182"/>
    </location>
</feature>
<feature type="binding site" evidence="2">
    <location>
        <begin position="246"/>
        <end position="253"/>
    </location>
    <ligand>
        <name>ATP</name>
        <dbReference type="ChEBI" id="CHEBI:30616"/>
    </ligand>
</feature>
<accession>Q0CI35</accession>
<proteinExistence type="inferred from homology"/>
<protein>
    <recommendedName>
        <fullName>ATP-dependent RNA helicase mak5</fullName>
        <ecNumber>3.6.4.13</ecNumber>
    </recommendedName>
</protein>
<evidence type="ECO:0000250" key="1"/>
<evidence type="ECO:0000255" key="2">
    <source>
        <dbReference type="PROSITE-ProRule" id="PRU00541"/>
    </source>
</evidence>
<evidence type="ECO:0000255" key="3">
    <source>
        <dbReference type="PROSITE-ProRule" id="PRU00542"/>
    </source>
</evidence>
<evidence type="ECO:0000256" key="4">
    <source>
        <dbReference type="SAM" id="MobiDB-lite"/>
    </source>
</evidence>
<evidence type="ECO:0000305" key="5"/>
<comment type="function">
    <text evidence="1">ATP-binding RNA helicase involved in the biogenesis of 60S ribosomal subunits and is required for the normal formation of 25S and 5.8S rRNAs.</text>
</comment>
<comment type="catalytic activity">
    <reaction>
        <text>ATP + H2O = ADP + phosphate + H(+)</text>
        <dbReference type="Rhea" id="RHEA:13065"/>
        <dbReference type="ChEBI" id="CHEBI:15377"/>
        <dbReference type="ChEBI" id="CHEBI:15378"/>
        <dbReference type="ChEBI" id="CHEBI:30616"/>
        <dbReference type="ChEBI" id="CHEBI:43474"/>
        <dbReference type="ChEBI" id="CHEBI:456216"/>
        <dbReference type="EC" id="3.6.4.13"/>
    </reaction>
</comment>
<comment type="subcellular location">
    <subcellularLocation>
        <location evidence="1">Nucleus</location>
        <location evidence="1">Nucleolus</location>
    </subcellularLocation>
</comment>
<comment type="domain">
    <text>The Q motif is unique to and characteristic of the DEAD box family of RNA helicases and controls ATP binding and hydrolysis.</text>
</comment>
<comment type="similarity">
    <text evidence="5">Belongs to the DEAD box helicase family. DDX24/MAK5 subfamily.</text>
</comment>
<comment type="sequence caution" evidence="5">
    <conflict type="erroneous gene model prediction">
        <sequence resource="EMBL-CDS" id="EAU33193"/>
    </conflict>
</comment>
<reference key="1">
    <citation type="submission" date="2005-09" db="EMBL/GenBank/DDBJ databases">
        <title>Annotation of the Aspergillus terreus NIH2624 genome.</title>
        <authorList>
            <person name="Birren B.W."/>
            <person name="Lander E.S."/>
            <person name="Galagan J.E."/>
            <person name="Nusbaum C."/>
            <person name="Devon K."/>
            <person name="Henn M."/>
            <person name="Ma L.-J."/>
            <person name="Jaffe D.B."/>
            <person name="Butler J."/>
            <person name="Alvarez P."/>
            <person name="Gnerre S."/>
            <person name="Grabherr M."/>
            <person name="Kleber M."/>
            <person name="Mauceli E.W."/>
            <person name="Brockman W."/>
            <person name="Rounsley S."/>
            <person name="Young S.K."/>
            <person name="LaButti K."/>
            <person name="Pushparaj V."/>
            <person name="DeCaprio D."/>
            <person name="Crawford M."/>
            <person name="Koehrsen M."/>
            <person name="Engels R."/>
            <person name="Montgomery P."/>
            <person name="Pearson M."/>
            <person name="Howarth C."/>
            <person name="Larson L."/>
            <person name="Luoma S."/>
            <person name="White J."/>
            <person name="Alvarado L."/>
            <person name="Kodira C.D."/>
            <person name="Zeng Q."/>
            <person name="Oleary S."/>
            <person name="Yandava C."/>
            <person name="Denning D.W."/>
            <person name="Nierman W.C."/>
            <person name="Milne T."/>
            <person name="Madden K."/>
        </authorList>
    </citation>
    <scope>NUCLEOTIDE SEQUENCE [LARGE SCALE GENOMIC DNA]</scope>
    <source>
        <strain>NIH 2624 / FGSC A1156</strain>
    </source>
</reference>
<sequence>MGQKRQRDQKGSGFQSKKRKRGANSSNADDKDDGWDGIVGVEDLNWKEVALPDRLDDAEGFFGLEEIEGVDIVRPEGSGEIRFKAKAGKPKKSILKNKTIPQEDKTFDDEWEGFSDGEAAQETTTTEPTEEPVQTTNEETEVKEKKEPKKKEAKKEVKKDAKNAKKEPKKKDLPSQKDKDIKPGLSFAALQDAEEDDGVDISAWESLGLSPEILNSLSKLKFSSPTAVQKSCIPPILDGHDVVGKASTGSGKTLAFGIPILEYYLEKKRRETKNKDDKKETSPIALILSPTRELAHQLVKHIGEVITHAPGVNARIALLTGGLSVQKQQRLLNGADIVIGTPGRVWEVLSGGQGLISKMKEIKYLVVDEADRLLSEGHFKEAHEILAALDREEINDFPGAEEDESDDEDSKTQRQTLVFSATFHRDLQQKLAGKGKWTGSDLMNKQESMEYLLKKLNFREEKPKFIDVNPVSQMAEGLKEGIVECAAMEKDLYLYTLLLYHPKHRTLVFTNSISAVRRLTQFLQALQLPALALHSSMAQKARLRSVERFSSPTADPSTILVATDVAARGLDIKGIDFVIHYHAPRTADTYVHRSGRTARAGASGKSVIICAPEEMVGVVRLAAKVHANMANGKRLPLESLELDRRIVSRVKQRVTLAARICDANIAKEKVSAEDNWLKNAAEELGVDYDSEEFDERQGRGRGRGRGRQQRERQASSISKAELAGMRAELKQLLSQRVNVGVSERYLTSGRVDIEALLRGEGNASFLGQVDPLGF</sequence>
<organism>
    <name type="scientific">Aspergillus terreus (strain NIH 2624 / FGSC A1156)</name>
    <dbReference type="NCBI Taxonomy" id="341663"/>
    <lineage>
        <taxon>Eukaryota</taxon>
        <taxon>Fungi</taxon>
        <taxon>Dikarya</taxon>
        <taxon>Ascomycota</taxon>
        <taxon>Pezizomycotina</taxon>
        <taxon>Eurotiomycetes</taxon>
        <taxon>Eurotiomycetidae</taxon>
        <taxon>Eurotiales</taxon>
        <taxon>Aspergillaceae</taxon>
        <taxon>Aspergillus</taxon>
        <taxon>Aspergillus subgen. Circumdati</taxon>
    </lineage>
</organism>
<dbReference type="EC" id="3.6.4.13"/>
<dbReference type="EMBL" id="CH476602">
    <property type="protein sequence ID" value="EAU33193.1"/>
    <property type="status" value="ALT_SEQ"/>
    <property type="molecule type" value="Genomic_DNA"/>
</dbReference>
<dbReference type="RefSeq" id="XP_001215827.1">
    <property type="nucleotide sequence ID" value="XM_001215827.1"/>
</dbReference>
<dbReference type="SMR" id="Q0CI35"/>
<dbReference type="STRING" id="341663.Q0CI35"/>
<dbReference type="GeneID" id="4322181"/>
<dbReference type="eggNOG" id="KOG0347">
    <property type="taxonomic scope" value="Eukaryota"/>
</dbReference>
<dbReference type="OrthoDB" id="4310724at2759"/>
<dbReference type="Proteomes" id="UP000007963">
    <property type="component" value="Unassembled WGS sequence"/>
</dbReference>
<dbReference type="GO" id="GO:0005730">
    <property type="term" value="C:nucleolus"/>
    <property type="evidence" value="ECO:0007669"/>
    <property type="project" value="UniProtKB-SubCell"/>
</dbReference>
<dbReference type="GO" id="GO:0005524">
    <property type="term" value="F:ATP binding"/>
    <property type="evidence" value="ECO:0007669"/>
    <property type="project" value="UniProtKB-KW"/>
</dbReference>
<dbReference type="GO" id="GO:0016887">
    <property type="term" value="F:ATP hydrolysis activity"/>
    <property type="evidence" value="ECO:0007669"/>
    <property type="project" value="RHEA"/>
</dbReference>
<dbReference type="GO" id="GO:0003723">
    <property type="term" value="F:RNA binding"/>
    <property type="evidence" value="ECO:0007669"/>
    <property type="project" value="UniProtKB-KW"/>
</dbReference>
<dbReference type="GO" id="GO:0003724">
    <property type="term" value="F:RNA helicase activity"/>
    <property type="evidence" value="ECO:0007669"/>
    <property type="project" value="UniProtKB-EC"/>
</dbReference>
<dbReference type="GO" id="GO:0006364">
    <property type="term" value="P:rRNA processing"/>
    <property type="evidence" value="ECO:0007669"/>
    <property type="project" value="UniProtKB-KW"/>
</dbReference>
<dbReference type="CDD" id="cd17946">
    <property type="entry name" value="DEADc_DDX24"/>
    <property type="match status" value="1"/>
</dbReference>
<dbReference type="CDD" id="cd18787">
    <property type="entry name" value="SF2_C_DEAD"/>
    <property type="match status" value="1"/>
</dbReference>
<dbReference type="Gene3D" id="3.40.50.300">
    <property type="entry name" value="P-loop containing nucleotide triphosphate hydrolases"/>
    <property type="match status" value="2"/>
</dbReference>
<dbReference type="InterPro" id="IPR011545">
    <property type="entry name" value="DEAD/DEAH_box_helicase_dom"/>
</dbReference>
<dbReference type="InterPro" id="IPR014001">
    <property type="entry name" value="Helicase_ATP-bd"/>
</dbReference>
<dbReference type="InterPro" id="IPR001650">
    <property type="entry name" value="Helicase_C-like"/>
</dbReference>
<dbReference type="InterPro" id="IPR027417">
    <property type="entry name" value="P-loop_NTPase"/>
</dbReference>
<dbReference type="InterPro" id="IPR000629">
    <property type="entry name" value="RNA-helicase_DEAD-box_CS"/>
</dbReference>
<dbReference type="InterPro" id="IPR014014">
    <property type="entry name" value="RNA_helicase_DEAD_Q_motif"/>
</dbReference>
<dbReference type="PANTHER" id="PTHR24031">
    <property type="entry name" value="RNA HELICASE"/>
    <property type="match status" value="1"/>
</dbReference>
<dbReference type="Pfam" id="PF00270">
    <property type="entry name" value="DEAD"/>
    <property type="match status" value="1"/>
</dbReference>
<dbReference type="Pfam" id="PF00271">
    <property type="entry name" value="Helicase_C"/>
    <property type="match status" value="1"/>
</dbReference>
<dbReference type="SMART" id="SM00487">
    <property type="entry name" value="DEXDc"/>
    <property type="match status" value="1"/>
</dbReference>
<dbReference type="SMART" id="SM00490">
    <property type="entry name" value="HELICc"/>
    <property type="match status" value="1"/>
</dbReference>
<dbReference type="SUPFAM" id="SSF52540">
    <property type="entry name" value="P-loop containing nucleoside triphosphate hydrolases"/>
    <property type="match status" value="1"/>
</dbReference>
<dbReference type="PROSITE" id="PS00039">
    <property type="entry name" value="DEAD_ATP_HELICASE"/>
    <property type="match status" value="1"/>
</dbReference>
<dbReference type="PROSITE" id="PS51192">
    <property type="entry name" value="HELICASE_ATP_BIND_1"/>
    <property type="match status" value="1"/>
</dbReference>
<dbReference type="PROSITE" id="PS51194">
    <property type="entry name" value="HELICASE_CTER"/>
    <property type="match status" value="1"/>
</dbReference>
<dbReference type="PROSITE" id="PS51195">
    <property type="entry name" value="Q_MOTIF"/>
    <property type="match status" value="1"/>
</dbReference>
<gene>
    <name type="primary">mak5</name>
    <name type="ORF">ATEG_06649</name>
</gene>
<keyword id="KW-0067">ATP-binding</keyword>
<keyword id="KW-0347">Helicase</keyword>
<keyword id="KW-0378">Hydrolase</keyword>
<keyword id="KW-0547">Nucleotide-binding</keyword>
<keyword id="KW-0539">Nucleus</keyword>
<keyword id="KW-1185">Reference proteome</keyword>
<keyword id="KW-0690">Ribosome biogenesis</keyword>
<keyword id="KW-0694">RNA-binding</keyword>
<keyword id="KW-0698">rRNA processing</keyword>
<name>MAK5_ASPTN</name>